<comment type="function">
    <text>Sulfur-poor seed storage protein.</text>
</comment>
<comment type="tissue specificity">
    <text>Developing endosperm.</text>
</comment>
<organism>
    <name type="scientific">Hordeum vulgare</name>
    <name type="common">Barley</name>
    <dbReference type="NCBI Taxonomy" id="4513"/>
    <lineage>
        <taxon>Eukaryota</taxon>
        <taxon>Viridiplantae</taxon>
        <taxon>Streptophyta</taxon>
        <taxon>Embryophyta</taxon>
        <taxon>Tracheophyta</taxon>
        <taxon>Spermatophyta</taxon>
        <taxon>Magnoliopsida</taxon>
        <taxon>Liliopsida</taxon>
        <taxon>Poales</taxon>
        <taxon>Poaceae</taxon>
        <taxon>BOP clade</taxon>
        <taxon>Pooideae</taxon>
        <taxon>Triticodae</taxon>
        <taxon>Triticeae</taxon>
        <taxon>Hordeinae</taxon>
        <taxon>Hordeum</taxon>
    </lineage>
</organism>
<accession>P17991</accession>
<dbReference type="EMBL" id="M35610">
    <property type="protein sequence ID" value="AAA32943.1"/>
    <property type="molecule type" value="mRNA"/>
</dbReference>
<dbReference type="PIR" id="A25677">
    <property type="entry name" value="A25677"/>
</dbReference>
<dbReference type="GO" id="GO:0045735">
    <property type="term" value="F:nutrient reservoir activity"/>
    <property type="evidence" value="ECO:0007669"/>
    <property type="project" value="UniProtKB-KW"/>
</dbReference>
<sequence>FPQPQEPFPQQPQQPFPLQPQQPFPQQPQQPFPQPQQPFRQQAELIIPQQPQQPFPLQPHQPYTQQTIWSMV</sequence>
<evidence type="ECO:0000256" key="1">
    <source>
        <dbReference type="SAM" id="MobiDB-lite"/>
    </source>
</evidence>
<proteinExistence type="evidence at transcript level"/>
<name>HOR8_HORVU</name>
<reference key="1">
    <citation type="journal article" date="1986" name="Carlsberg Res. Commun.">
        <title>Nucleotide sequences of cDNA clones for C-hordein polypeptides.</title>
        <authorList>
            <person name="Rasmussen S.K."/>
            <person name="Brandt A."/>
        </authorList>
    </citation>
    <scope>NUCLEOTIDE SEQUENCE [MRNA]</scope>
    <source>
        <tissue>Endosperm</tissue>
    </source>
</reference>
<protein>
    <recommendedName>
        <fullName>C-hordein</fullName>
    </recommendedName>
    <alternativeName>
        <fullName>Clone PC HOR1-3</fullName>
    </alternativeName>
</protein>
<keyword id="KW-0708">Seed storage protein</keyword>
<keyword id="KW-0758">Storage protein</keyword>
<feature type="chain" id="PRO_0000102604" description="C-hordein">
    <location>
        <begin position="1" status="less than"/>
        <end position="72"/>
    </location>
</feature>
<feature type="region of interest" description="Disordered" evidence="1">
    <location>
        <begin position="1"/>
        <end position="61"/>
    </location>
</feature>
<feature type="compositionally biased region" description="Pro residues" evidence="1">
    <location>
        <begin position="1"/>
        <end position="36"/>
    </location>
</feature>
<feature type="compositionally biased region" description="Low complexity" evidence="1">
    <location>
        <begin position="37"/>
        <end position="50"/>
    </location>
</feature>
<feature type="non-terminal residue">
    <location>
        <position position="1"/>
    </location>
</feature>